<reference key="1">
    <citation type="journal article" date="2013" name="Nature">
        <title>The zebrafish reference genome sequence and its relationship to the human genome.</title>
        <authorList>
            <person name="Howe K."/>
            <person name="Clark M.D."/>
            <person name="Torroja C.F."/>
            <person name="Torrance J."/>
            <person name="Berthelot C."/>
            <person name="Muffato M."/>
            <person name="Collins J.E."/>
            <person name="Humphray S."/>
            <person name="McLaren K."/>
            <person name="Matthews L."/>
            <person name="McLaren S."/>
            <person name="Sealy I."/>
            <person name="Caccamo M."/>
            <person name="Churcher C."/>
            <person name="Scott C."/>
            <person name="Barrett J.C."/>
            <person name="Koch R."/>
            <person name="Rauch G.J."/>
            <person name="White S."/>
            <person name="Chow W."/>
            <person name="Kilian B."/>
            <person name="Quintais L.T."/>
            <person name="Guerra-Assuncao J.A."/>
            <person name="Zhou Y."/>
            <person name="Gu Y."/>
            <person name="Yen J."/>
            <person name="Vogel J.H."/>
            <person name="Eyre T."/>
            <person name="Redmond S."/>
            <person name="Banerjee R."/>
            <person name="Chi J."/>
            <person name="Fu B."/>
            <person name="Langley E."/>
            <person name="Maguire S.F."/>
            <person name="Laird G.K."/>
            <person name="Lloyd D."/>
            <person name="Kenyon E."/>
            <person name="Donaldson S."/>
            <person name="Sehra H."/>
            <person name="Almeida-King J."/>
            <person name="Loveland J."/>
            <person name="Trevanion S."/>
            <person name="Jones M."/>
            <person name="Quail M."/>
            <person name="Willey D."/>
            <person name="Hunt A."/>
            <person name="Burton J."/>
            <person name="Sims S."/>
            <person name="McLay K."/>
            <person name="Plumb B."/>
            <person name="Davis J."/>
            <person name="Clee C."/>
            <person name="Oliver K."/>
            <person name="Clark R."/>
            <person name="Riddle C."/>
            <person name="Elliot D."/>
            <person name="Threadgold G."/>
            <person name="Harden G."/>
            <person name="Ware D."/>
            <person name="Begum S."/>
            <person name="Mortimore B."/>
            <person name="Kerry G."/>
            <person name="Heath P."/>
            <person name="Phillimore B."/>
            <person name="Tracey A."/>
            <person name="Corby N."/>
            <person name="Dunn M."/>
            <person name="Johnson C."/>
            <person name="Wood J."/>
            <person name="Clark S."/>
            <person name="Pelan S."/>
            <person name="Griffiths G."/>
            <person name="Smith M."/>
            <person name="Glithero R."/>
            <person name="Howden P."/>
            <person name="Barker N."/>
            <person name="Lloyd C."/>
            <person name="Stevens C."/>
            <person name="Harley J."/>
            <person name="Holt K."/>
            <person name="Panagiotidis G."/>
            <person name="Lovell J."/>
            <person name="Beasley H."/>
            <person name="Henderson C."/>
            <person name="Gordon D."/>
            <person name="Auger K."/>
            <person name="Wright D."/>
            <person name="Collins J."/>
            <person name="Raisen C."/>
            <person name="Dyer L."/>
            <person name="Leung K."/>
            <person name="Robertson L."/>
            <person name="Ambridge K."/>
            <person name="Leongamornlert D."/>
            <person name="McGuire S."/>
            <person name="Gilderthorp R."/>
            <person name="Griffiths C."/>
            <person name="Manthravadi D."/>
            <person name="Nichol S."/>
            <person name="Barker G."/>
            <person name="Whitehead S."/>
            <person name="Kay M."/>
            <person name="Brown J."/>
            <person name="Murnane C."/>
            <person name="Gray E."/>
            <person name="Humphries M."/>
            <person name="Sycamore N."/>
            <person name="Barker D."/>
            <person name="Saunders D."/>
            <person name="Wallis J."/>
            <person name="Babbage A."/>
            <person name="Hammond S."/>
            <person name="Mashreghi-Mohammadi M."/>
            <person name="Barr L."/>
            <person name="Martin S."/>
            <person name="Wray P."/>
            <person name="Ellington A."/>
            <person name="Matthews N."/>
            <person name="Ellwood M."/>
            <person name="Woodmansey R."/>
            <person name="Clark G."/>
            <person name="Cooper J."/>
            <person name="Tromans A."/>
            <person name="Grafham D."/>
            <person name="Skuce C."/>
            <person name="Pandian R."/>
            <person name="Andrews R."/>
            <person name="Harrison E."/>
            <person name="Kimberley A."/>
            <person name="Garnett J."/>
            <person name="Fosker N."/>
            <person name="Hall R."/>
            <person name="Garner P."/>
            <person name="Kelly D."/>
            <person name="Bird C."/>
            <person name="Palmer S."/>
            <person name="Gehring I."/>
            <person name="Berger A."/>
            <person name="Dooley C.M."/>
            <person name="Ersan-Urun Z."/>
            <person name="Eser C."/>
            <person name="Geiger H."/>
            <person name="Geisler M."/>
            <person name="Karotki L."/>
            <person name="Kirn A."/>
            <person name="Konantz J."/>
            <person name="Konantz M."/>
            <person name="Oberlander M."/>
            <person name="Rudolph-Geiger S."/>
            <person name="Teucke M."/>
            <person name="Lanz C."/>
            <person name="Raddatz G."/>
            <person name="Osoegawa K."/>
            <person name="Zhu B."/>
            <person name="Rapp A."/>
            <person name="Widaa S."/>
            <person name="Langford C."/>
            <person name="Yang F."/>
            <person name="Schuster S.C."/>
            <person name="Carter N.P."/>
            <person name="Harrow J."/>
            <person name="Ning Z."/>
            <person name="Herrero J."/>
            <person name="Searle S.M."/>
            <person name="Enright A."/>
            <person name="Geisler R."/>
            <person name="Plasterk R.H."/>
            <person name="Lee C."/>
            <person name="Westerfield M."/>
            <person name="de Jong P.J."/>
            <person name="Zon L.I."/>
            <person name="Postlethwait J.H."/>
            <person name="Nusslein-Volhard C."/>
            <person name="Hubbard T.J."/>
            <person name="Roest Crollius H."/>
            <person name="Rogers J."/>
            <person name="Stemple D.L."/>
        </authorList>
    </citation>
    <scope>NUCLEOTIDE SEQUENCE [LARGE SCALE GENOMIC DNA]</scope>
    <source>
        <strain>Tuebingen</strain>
    </source>
</reference>
<reference key="2">
    <citation type="journal article" date="2010" name="Am. J. Hum. Genet.">
        <title>WDR11, a WD protein that interacts with transcription factor EMX1, is mutated in idiopathic hypogonadotropic hypogonadism and Kallmann syndrome.</title>
        <authorList>
            <person name="Kim H.G."/>
            <person name="Ahn J.W."/>
            <person name="Kurth I."/>
            <person name="Ullmann R."/>
            <person name="Kim H.T."/>
            <person name="Kulharya A."/>
            <person name="Ha K.S."/>
            <person name="Itokawa Y."/>
            <person name="Meliciani I."/>
            <person name="Wenzel W."/>
            <person name="Lee D."/>
            <person name="Rosenberger G."/>
            <person name="Ozata M."/>
            <person name="Bick D.P."/>
            <person name="Sherins R.J."/>
            <person name="Nagase T."/>
            <person name="Tekin M."/>
            <person name="Kim S.H."/>
            <person name="Kim C.H."/>
            <person name="Ropers H.H."/>
            <person name="Gusella J.F."/>
            <person name="Kalscheuer V."/>
            <person name="Choi C.Y."/>
            <person name="Layman L.C."/>
        </authorList>
    </citation>
    <scope>DEVELOPMENTAL STAGE</scope>
</reference>
<reference key="3">
    <citation type="journal article" date="2018" name="EMBO Rep.">
        <title>WDR11-mediated Hedgehog signalling defects underlie a new ciliopathy related to Kallmann syndrome.</title>
        <authorList>
            <person name="Kim Y.J."/>
            <person name="Osborn D.P."/>
            <person name="Lee J.Y."/>
            <person name="Araki M."/>
            <person name="Araki K."/>
            <person name="Mohun T."/>
            <person name="Kaensaekoski J."/>
            <person name="Brandstack N."/>
            <person name="Kim H.T."/>
            <person name="Miralles F."/>
            <person name="Kim C.H."/>
            <person name="Brown N.A."/>
            <person name="Kim H.G."/>
            <person name="Martinez-Barbera J.P."/>
            <person name="Ataliotis P."/>
            <person name="Raivio T."/>
            <person name="Layman L.C."/>
            <person name="Kim S.H."/>
        </authorList>
    </citation>
    <scope>FUNCTION</scope>
    <scope>DISRUPTION PHENOTYPE</scope>
    <scope>SUBCELLULAR LOCATION</scope>
</reference>
<comment type="function">
    <text evidence="1 5">Involved in the Hedgehog (Hh) signaling pathway, is essential for normal ciliogenesis (PubMed:29263200). Regulates the proteolytic processing of gli3 and cooperates with the transcription factor emx1 in the induction of downstream Hh pathway gene expression and gonadotropin-releasing hormone production. WDR11 complex facilitates the tethering of Adaptor protein-1 complex (AP-1)-derived vesicles.</text>
</comment>
<comment type="subunit">
    <text evidence="1">Component of the complex WDR11.</text>
</comment>
<comment type="subcellular location">
    <subcellularLocation>
        <location evidence="1">Cytoplasm</location>
        <location evidence="1">Cytoskeleton</location>
        <location evidence="1">Cilium basal body</location>
    </subcellularLocation>
    <subcellularLocation>
        <location evidence="1">Cytoplasm</location>
    </subcellularLocation>
    <subcellularLocation>
        <location evidence="1">Nucleus</location>
    </subcellularLocation>
    <subcellularLocation>
        <location evidence="5">Cytoplasm</location>
        <location evidence="5">Cytoskeleton</location>
        <location evidence="5">Cilium axoneme</location>
    </subcellularLocation>
    <subcellularLocation>
        <location evidence="1">Cytoplasmic vesicle</location>
    </subcellularLocation>
    <subcellularLocation>
        <location evidence="1">Golgi apparatus</location>
        <location evidence="1">trans-Golgi network</location>
    </subcellularLocation>
    <text evidence="1">Shuttles from the cilium to the nucleus in response to Hh signaling. Might be shuttling between the nucleus and the cytoplasm.</text>
</comment>
<comment type="developmental stage">
    <text evidence="4">Expressed ubiquitously at 24 hpf.</text>
</comment>
<comment type="disruption phenotype">
    <text evidence="5">Morpholino knockdown causes microphtalmia, microcephaly, melanocyte disorganization, curved body axis, motility defects and narrow trunk. Morphants also exhibit aberrant head cartilage formation and cranial-facial dysmorphology.</text>
</comment>
<protein>
    <recommendedName>
        <fullName evidence="6">WD repeat-containing protein 11</fullName>
    </recommendedName>
</protein>
<proteinExistence type="evidence at transcript level"/>
<gene>
    <name type="primary">wdr11</name>
</gene>
<sequence>MASTMIPYTVNIKLAARTLTGTLNLQNKTAVDWGWQGLIAQGCHSSILIIDPNTAQTIQVLERHKANVVKVKWSRENYHHSLSSPYSLRLASADAAGKIIVWDVVSGMAHCEIQEHSKPIQDMDWLWAQDASRDLLLAVHPPNYIVLWNGDTGTKLWKKSYAENILSFSFDPFEPSNLALLTSEGIVFITDFSHSKPPGSGGKKVYIASPHSSPAHSKPAAAQPTGAKKALNKVKVLITNEKPTAEAVTLNDCLQLSYLPSKRNHMLLLYPREILILDLELSQTVGVVAIERSGVPFIQVIPCAQRDALYCLHENGCITLRVCRSTTPSPNETVTDPEQNSQELVYDLRSQCDAIRVTKTVRPYRVVICPVNENKAVLVVSDGRVMLWELKAHASKSSSNLSSGLPPLYSAVNFCGTPLRQNQKCIPDLSLNSMIGHSLIPGVDSPRPLADQKEVHLKFLLTGLLSGLPLPPFSLRMCPPLTTKNINHYQPLLAVGTSNGSVLVYNLTSGLLHKELSVHSCEVRGIEWISLTSFLSFATSVPNNLGLVRNELQHVDLRTGRCFAFRGERGNDEPAIEMIKVSHLKQYLVVVFRDKPLELWDVRTGTLLREMAKNFPTVTALEWSPSHNLKSLKKKQLAAREAMARQTTLADAEQSSVESSVISLLQDAESKSESSQGISAREHFVFTDTDGQVYHITVEGNTVKDGARIPPDGSMGSIACIAWKGDTLVLGDVDGNLNFWDLKARLSRGVPTHRGWVKKIRFAPGKGNQKLLVMYTDGAEVWDTKEVQMVSSIRVGRNVNYRILDIDWCTSDKVVLASDDGCVRVLEMAMKSASYRMDEQDLTDPVWCPYLLLPRAALTLKAFLLLQPWMDTFTMDITQVDYKEKDEIKGLIQEQLNSLSNDIKSVLQDPNLSLLQRCLLVSRLFGDESDLQFWTVASHYIQAFAQSAQSNESVPEGQAAASHLDICHDILCESSFFQGFQLERVRLQEVKRSSYEHTKKCADQLLLLGQTDRAVQLLLETSADNSSYYCDSLKACLVTTITSSGPSQSTIKLVATNMIANGKLAEGVQLLCLIDKAADACRYLQTYGEWTRAAWLAKVRLNAAEGSDVLKRWAEHLCSPQVNQKSKAMLVLLSLGCFQKVGEMLHSMRYFDRAALFIEACLKYGVMETNDDINKLVGAAFVDYAKLLRSIGLKQGAVHWASRAGEAGKQLLEDLSQTEGTGTESSPADDTDNSLVNIE</sequence>
<accession>F1QEB7</accession>
<accession>F1QHQ4</accession>
<keyword id="KW-0966">Cell projection</keyword>
<keyword id="KW-0963">Cytoplasm</keyword>
<keyword id="KW-0968">Cytoplasmic vesicle</keyword>
<keyword id="KW-0206">Cytoskeleton</keyword>
<keyword id="KW-0333">Golgi apparatus</keyword>
<keyword id="KW-0539">Nucleus</keyword>
<keyword id="KW-0597">Phosphoprotein</keyword>
<keyword id="KW-1185">Reference proteome</keyword>
<keyword id="KW-0677">Repeat</keyword>
<keyword id="KW-0853">WD repeat</keyword>
<dbReference type="EMBL" id="BX571701">
    <property type="status" value="NOT_ANNOTATED_CDS"/>
    <property type="molecule type" value="Genomic_DNA"/>
</dbReference>
<dbReference type="RefSeq" id="NP_001410892.1">
    <property type="nucleotide sequence ID" value="NM_001423963.1"/>
</dbReference>
<dbReference type="RefSeq" id="XP_687231.3">
    <property type="nucleotide sequence ID" value="XM_682139.7"/>
</dbReference>
<dbReference type="SMR" id="F1QEB7"/>
<dbReference type="FunCoup" id="F1QEB7">
    <property type="interactions" value="919"/>
</dbReference>
<dbReference type="STRING" id="7955.ENSDARP00000123378"/>
<dbReference type="PaxDb" id="7955-ENSDARP00000102548"/>
<dbReference type="Ensembl" id="ENSDART00000114328">
    <property type="protein sequence ID" value="ENSDARP00000102548"/>
    <property type="gene ID" value="ENSDARG00000075245"/>
</dbReference>
<dbReference type="Ensembl" id="ENSDART00000136977">
    <property type="protein sequence ID" value="ENSDARP00000123378"/>
    <property type="gene ID" value="ENSDARG00000075245"/>
</dbReference>
<dbReference type="GeneID" id="558865"/>
<dbReference type="AGR" id="ZFIN:ZDB-GENE-081107-28"/>
<dbReference type="ZFIN" id="ZDB-GENE-081107-28">
    <property type="gene designation" value="wdr11"/>
</dbReference>
<dbReference type="eggNOG" id="KOG1912">
    <property type="taxonomic scope" value="Eukaryota"/>
</dbReference>
<dbReference type="InParanoid" id="F1QEB7"/>
<dbReference type="OMA" id="WDTKEIQ"/>
<dbReference type="OrthoDB" id="1291858at2759"/>
<dbReference type="PhylomeDB" id="F1QEB7"/>
<dbReference type="TreeFam" id="TF314830"/>
<dbReference type="PRO" id="PR:F1QEB7"/>
<dbReference type="Proteomes" id="UP000000437">
    <property type="component" value="Chromosome 13"/>
</dbReference>
<dbReference type="Bgee" id="ENSDARG00000075245">
    <property type="expression patterns" value="Expressed in brain and 24 other cell types or tissues"/>
</dbReference>
<dbReference type="GO" id="GO:0005930">
    <property type="term" value="C:axoneme"/>
    <property type="evidence" value="ECO:0000314"/>
    <property type="project" value="ZFIN"/>
</dbReference>
<dbReference type="GO" id="GO:0036064">
    <property type="term" value="C:ciliary basal body"/>
    <property type="evidence" value="ECO:0000250"/>
    <property type="project" value="UniProtKB"/>
</dbReference>
<dbReference type="GO" id="GO:0005737">
    <property type="term" value="C:cytoplasm"/>
    <property type="evidence" value="ECO:0000318"/>
    <property type="project" value="GO_Central"/>
</dbReference>
<dbReference type="GO" id="GO:0031410">
    <property type="term" value="C:cytoplasmic vesicle"/>
    <property type="evidence" value="ECO:0000250"/>
    <property type="project" value="UniProtKB"/>
</dbReference>
<dbReference type="GO" id="GO:0005634">
    <property type="term" value="C:nucleus"/>
    <property type="evidence" value="ECO:0000250"/>
    <property type="project" value="UniProtKB"/>
</dbReference>
<dbReference type="GO" id="GO:0005802">
    <property type="term" value="C:trans-Golgi network"/>
    <property type="evidence" value="ECO:0000250"/>
    <property type="project" value="UniProtKB"/>
</dbReference>
<dbReference type="GO" id="GO:0060271">
    <property type="term" value="P:cilium assembly"/>
    <property type="evidence" value="ECO:0000315"/>
    <property type="project" value="ZFIN"/>
</dbReference>
<dbReference type="GO" id="GO:0060322">
    <property type="term" value="P:head development"/>
    <property type="evidence" value="ECO:0000250"/>
    <property type="project" value="UniProtKB"/>
</dbReference>
<dbReference type="GO" id="GO:0007507">
    <property type="term" value="P:heart development"/>
    <property type="evidence" value="ECO:0000250"/>
    <property type="project" value="UniProtKB"/>
</dbReference>
<dbReference type="GO" id="GO:0006886">
    <property type="term" value="P:intracellular protein transport"/>
    <property type="evidence" value="ECO:0000250"/>
    <property type="project" value="UniProtKB"/>
</dbReference>
<dbReference type="GO" id="GO:0035264">
    <property type="term" value="P:multicellular organism growth"/>
    <property type="evidence" value="ECO:0000250"/>
    <property type="project" value="UniProtKB"/>
</dbReference>
<dbReference type="GO" id="GO:0001755">
    <property type="term" value="P:neural crest cell migration"/>
    <property type="evidence" value="ECO:0000315"/>
    <property type="project" value="ZFIN"/>
</dbReference>
<dbReference type="GO" id="GO:0008589">
    <property type="term" value="P:regulation of smoothened signaling pathway"/>
    <property type="evidence" value="ECO:0000250"/>
    <property type="project" value="UniProtKB"/>
</dbReference>
<dbReference type="GO" id="GO:0099041">
    <property type="term" value="P:vesicle tethering to Golgi"/>
    <property type="evidence" value="ECO:0000250"/>
    <property type="project" value="UniProtKB"/>
</dbReference>
<dbReference type="FunFam" id="2.130.10.10:FF:000204">
    <property type="entry name" value="WD repeat domain 11"/>
    <property type="match status" value="1"/>
</dbReference>
<dbReference type="FunFam" id="2.130.10.10:FF:000296">
    <property type="entry name" value="WD repeat domain 11"/>
    <property type="match status" value="1"/>
</dbReference>
<dbReference type="FunFam" id="2.130.10.10:FF:000309">
    <property type="entry name" value="WD repeat domain 11"/>
    <property type="match status" value="1"/>
</dbReference>
<dbReference type="Gene3D" id="2.130.10.10">
    <property type="entry name" value="YVTN repeat-like/Quinoprotein amine dehydrogenase"/>
    <property type="match status" value="3"/>
</dbReference>
<dbReference type="InterPro" id="IPR015943">
    <property type="entry name" value="WD40/YVTN_repeat-like_dom_sf"/>
</dbReference>
<dbReference type="InterPro" id="IPR036322">
    <property type="entry name" value="WD40_repeat_dom_sf"/>
</dbReference>
<dbReference type="InterPro" id="IPR001680">
    <property type="entry name" value="WD40_rpt"/>
</dbReference>
<dbReference type="InterPro" id="IPR039694">
    <property type="entry name" value="WDR11"/>
</dbReference>
<dbReference type="PANTHER" id="PTHR14593">
    <property type="entry name" value="WD REPEAT-CONTAINING PROTEIN 11"/>
    <property type="match status" value="1"/>
</dbReference>
<dbReference type="PANTHER" id="PTHR14593:SF5">
    <property type="entry name" value="WD REPEAT-CONTAINING PROTEIN 11"/>
    <property type="match status" value="1"/>
</dbReference>
<dbReference type="Pfam" id="PF23751">
    <property type="entry name" value="Beta-prop_WDR11_1st"/>
    <property type="match status" value="1"/>
</dbReference>
<dbReference type="Pfam" id="PF23752">
    <property type="entry name" value="Beta-prop_WDR11_2nd"/>
    <property type="match status" value="1"/>
</dbReference>
<dbReference type="Pfam" id="PF23753">
    <property type="entry name" value="TPR_WDR11"/>
    <property type="match status" value="1"/>
</dbReference>
<dbReference type="SMART" id="SM00320">
    <property type="entry name" value="WD40"/>
    <property type="match status" value="6"/>
</dbReference>
<dbReference type="SUPFAM" id="SSF50978">
    <property type="entry name" value="WD40 repeat-like"/>
    <property type="match status" value="2"/>
</dbReference>
<dbReference type="PROSITE" id="PS00678">
    <property type="entry name" value="WD_REPEATS_1"/>
    <property type="match status" value="2"/>
</dbReference>
<feature type="chain" id="PRO_0000445435" description="WD repeat-containing protein 11">
    <location>
        <begin position="1"/>
        <end position="1239"/>
    </location>
</feature>
<feature type="repeat" description="WD 1" evidence="2">
    <location>
        <begin position="63"/>
        <end position="112"/>
    </location>
</feature>
<feature type="repeat" description="WD 2" evidence="2">
    <location>
        <begin position="115"/>
        <end position="158"/>
    </location>
</feature>
<feature type="repeat" description="WD 3" evidence="2">
    <location>
        <begin position="358"/>
        <end position="398"/>
    </location>
</feature>
<feature type="repeat" description="WD 4" evidence="2">
    <location>
        <begin position="476"/>
        <end position="515"/>
    </location>
</feature>
<feature type="repeat" description="WD 5" evidence="2">
    <location>
        <begin position="571"/>
        <end position="610"/>
    </location>
</feature>
<feature type="repeat" description="WD 6" evidence="2">
    <location>
        <begin position="713"/>
        <end position="750"/>
    </location>
</feature>
<feature type="repeat" description="WD 7" evidence="2">
    <location>
        <begin position="752"/>
        <end position="792"/>
    </location>
</feature>
<feature type="repeat" description="WD 8" evidence="2">
    <location>
        <begin position="798"/>
        <end position="836"/>
    </location>
</feature>
<feature type="repeat" description="WD 9" evidence="2">
    <location>
        <begin position="898"/>
        <end position="944"/>
    </location>
</feature>
<feature type="region of interest" description="Disordered" evidence="3">
    <location>
        <begin position="1213"/>
        <end position="1239"/>
    </location>
</feature>
<feature type="compositionally biased region" description="Polar residues" evidence="3">
    <location>
        <begin position="1215"/>
        <end position="1226"/>
    </location>
</feature>
<name>WDR11_DANRE</name>
<evidence type="ECO:0000250" key="1">
    <source>
        <dbReference type="UniProtKB" id="Q9BZH6"/>
    </source>
</evidence>
<evidence type="ECO:0000255" key="2"/>
<evidence type="ECO:0000256" key="3">
    <source>
        <dbReference type="SAM" id="MobiDB-lite"/>
    </source>
</evidence>
<evidence type="ECO:0000269" key="4">
    <source>
    </source>
</evidence>
<evidence type="ECO:0000269" key="5">
    <source>
    </source>
</evidence>
<evidence type="ECO:0000305" key="6"/>
<organism>
    <name type="scientific">Danio rerio</name>
    <name type="common">Zebrafish</name>
    <name type="synonym">Brachydanio rerio</name>
    <dbReference type="NCBI Taxonomy" id="7955"/>
    <lineage>
        <taxon>Eukaryota</taxon>
        <taxon>Metazoa</taxon>
        <taxon>Chordata</taxon>
        <taxon>Craniata</taxon>
        <taxon>Vertebrata</taxon>
        <taxon>Euteleostomi</taxon>
        <taxon>Actinopterygii</taxon>
        <taxon>Neopterygii</taxon>
        <taxon>Teleostei</taxon>
        <taxon>Ostariophysi</taxon>
        <taxon>Cypriniformes</taxon>
        <taxon>Danionidae</taxon>
        <taxon>Danioninae</taxon>
        <taxon>Danio</taxon>
    </lineage>
</organism>